<evidence type="ECO:0000255" key="1"/>
<evidence type="ECO:0000269" key="2">
    <source>
    </source>
</evidence>
<evidence type="ECO:0000303" key="3">
    <source>
    </source>
</evidence>
<evidence type="ECO:0000305" key="4"/>
<evidence type="ECO:0000305" key="5">
    <source>
    </source>
</evidence>
<organism>
    <name type="scientific">Conus magus</name>
    <name type="common">Magical cone</name>
    <dbReference type="NCBI Taxonomy" id="6492"/>
    <lineage>
        <taxon>Eukaryota</taxon>
        <taxon>Metazoa</taxon>
        <taxon>Spiralia</taxon>
        <taxon>Lophotrochozoa</taxon>
        <taxon>Mollusca</taxon>
        <taxon>Gastropoda</taxon>
        <taxon>Caenogastropoda</taxon>
        <taxon>Neogastropoda</taxon>
        <taxon>Conoidea</taxon>
        <taxon>Conidae</taxon>
        <taxon>Conus</taxon>
        <taxon>Pionoconus</taxon>
    </lineage>
</organism>
<protein>
    <recommendedName>
        <fullName evidence="3">Conodipine-M alpha chain</fullName>
        <ecNumber>3.1.1.4</ecNumber>
    </recommendedName>
    <alternativeName>
        <fullName>Phosphatidylcholine 2-acylhydrolase</fullName>
    </alternativeName>
    <alternativeName>
        <fullName>Phospholipase A2</fullName>
        <shortName>PLA2</shortName>
    </alternativeName>
</protein>
<feature type="chain" id="PRO_0000086866" description="Conodipine-M alpha chain" evidence="2">
    <location>
        <begin position="1"/>
        <end position="77"/>
    </location>
</feature>
<feature type="active site" evidence="1">
    <location>
        <position position="36"/>
    </location>
</feature>
<feature type="modified residue" description="Pyrrolidone carboxylic acid" evidence="2">
    <location>
        <position position="1"/>
    </location>
</feature>
<keyword id="KW-0106">Calcium</keyword>
<keyword id="KW-0903">Direct protein sequencing</keyword>
<keyword id="KW-1015">Disulfide bond</keyword>
<keyword id="KW-0378">Hydrolase</keyword>
<keyword id="KW-0442">Lipid degradation</keyword>
<keyword id="KW-0443">Lipid metabolism</keyword>
<keyword id="KW-0873">Pyrrolidone carboxylic acid</keyword>
<keyword id="KW-0964">Secreted</keyword>
<keyword id="KW-0800">Toxin</keyword>
<name>COMA_CONMA</name>
<reference key="1">
    <citation type="journal article" date="1995" name="J. Biol. Chem.">
        <title>Conodipine-M, a novel phospholipase A2 isolated from the venom of the marine snail Conus magus.</title>
        <authorList>
            <person name="McIntosh J.M."/>
            <person name="Ghomashchi F."/>
            <person name="Gelb M.H."/>
            <person name="Dooley D.J."/>
            <person name="Stoehr S.J."/>
            <person name="Giordani A.B."/>
            <person name="Naisbitt S.R."/>
            <person name="Olivera B.M."/>
        </authorList>
    </citation>
    <scope>PROTEIN SEQUENCE</scope>
    <scope>FUNCTION</scope>
    <scope>CATALYTIC ACTIVITY</scope>
    <scope>COFACTOR</scope>
    <scope>ACTIVITY REGULATION</scope>
    <scope>SUBUNIT</scope>
    <scope>SUBCELLULAR LOCATION</scope>
    <scope>MASS SPECTROMETRY</scope>
    <scope>PYROGLUTAMATE FORMATION AT GLN-1</scope>
    <source>
        <tissue>Venom</tissue>
    </source>
</reference>
<comment type="function">
    <text evidence="5">Heterodimer: conodipine-M catalyzes the calcium-dependent hydrolysis of the 2-acyl groups in 3-sn-phosphoglycerides. This activity may be supported by the alpha chain. Conodipine-M inhibits the binding of isradipine (a ligand specific for L-type calcium channel) to L-type calcium channels.</text>
</comment>
<comment type="catalytic activity">
    <reaction evidence="2">
        <text>a 1,2-diacyl-sn-glycero-3-phosphocholine + H2O = a 1-acyl-sn-glycero-3-phosphocholine + a fatty acid + H(+)</text>
        <dbReference type="Rhea" id="RHEA:15801"/>
        <dbReference type="ChEBI" id="CHEBI:15377"/>
        <dbReference type="ChEBI" id="CHEBI:15378"/>
        <dbReference type="ChEBI" id="CHEBI:28868"/>
        <dbReference type="ChEBI" id="CHEBI:57643"/>
        <dbReference type="ChEBI" id="CHEBI:58168"/>
        <dbReference type="EC" id="3.1.1.4"/>
    </reaction>
</comment>
<comment type="cofactor">
    <cofactor evidence="2">
        <name>Ca(2+)</name>
        <dbReference type="ChEBI" id="CHEBI:29108"/>
    </cofactor>
</comment>
<comment type="activity regulation">
    <text evidence="2">Inhibited by linoleoyl amide and MG14.</text>
</comment>
<comment type="subunit">
    <text evidence="2">Heterodimer of an alpha and a beta chains; probably disulfide-linked.</text>
</comment>
<comment type="subcellular location">
    <subcellularLocation>
        <location evidence="2">Secreted</location>
    </subcellularLocation>
</comment>
<comment type="tissue specificity">
    <text evidence="5">Expressed by the venom duct.</text>
</comment>
<comment type="mass spectrometry" mass="8571.0" method="Electrospray" evidence="2"/>
<comment type="similarity">
    <text evidence="4">Belongs to the phospholipase A2 family. Group IX subfamily.</text>
</comment>
<sequence length="77" mass="8492">QXPSTAELCKINSNACSVPFSXIPCQKXFLAACDRHDTCYHCGKHFGFKQDDCDDAFFRDMTALCAHGTDDEGXCPX</sequence>
<accession>Q9TWL9</accession>
<proteinExistence type="evidence at protein level"/>
<dbReference type="EC" id="3.1.1.4"/>
<dbReference type="ConoServer" id="5541">
    <property type="toxin name" value="Conodipine-M alpha chain"/>
</dbReference>
<dbReference type="GO" id="GO:0005576">
    <property type="term" value="C:extracellular region"/>
    <property type="evidence" value="ECO:0007669"/>
    <property type="project" value="UniProtKB-SubCell"/>
</dbReference>
<dbReference type="GO" id="GO:0004623">
    <property type="term" value="F:phospholipase A2 activity"/>
    <property type="evidence" value="ECO:0007669"/>
    <property type="project" value="UniProtKB-EC"/>
</dbReference>
<dbReference type="GO" id="GO:0090729">
    <property type="term" value="F:toxin activity"/>
    <property type="evidence" value="ECO:0007669"/>
    <property type="project" value="UniProtKB-KW"/>
</dbReference>
<dbReference type="GO" id="GO:0050482">
    <property type="term" value="P:arachidonate secretion"/>
    <property type="evidence" value="ECO:0007669"/>
    <property type="project" value="InterPro"/>
</dbReference>
<dbReference type="GO" id="GO:0016042">
    <property type="term" value="P:lipid catabolic process"/>
    <property type="evidence" value="ECO:0007669"/>
    <property type="project" value="UniProtKB-KW"/>
</dbReference>
<dbReference type="GO" id="GO:0006644">
    <property type="term" value="P:phospholipid metabolic process"/>
    <property type="evidence" value="ECO:0007669"/>
    <property type="project" value="InterPro"/>
</dbReference>
<dbReference type="Gene3D" id="1.20.90.10">
    <property type="entry name" value="Phospholipase A2 domain"/>
    <property type="match status" value="1"/>
</dbReference>
<dbReference type="InterPro" id="IPR036444">
    <property type="entry name" value="PLipase_A2_dom_sf"/>
</dbReference>
<dbReference type="SUPFAM" id="SSF48619">
    <property type="entry name" value="Phospholipase A2, PLA2"/>
    <property type="match status" value="1"/>
</dbReference>